<reference key="1">
    <citation type="journal article" date="2009" name="J. Bacteriol.">
        <title>The genome of Thermosipho africanus TCF52B: lateral genetic connections to the Firmicutes and Archaea.</title>
        <authorList>
            <person name="Nesboe C.L."/>
            <person name="Bapteste E."/>
            <person name="Curtis B."/>
            <person name="Dahle H."/>
            <person name="Lopez P."/>
            <person name="Macleod D."/>
            <person name="Dlutek M."/>
            <person name="Bowman S."/>
            <person name="Zhaxybayeva O."/>
            <person name="Birkeland N.-K."/>
            <person name="Doolittle W.F."/>
        </authorList>
    </citation>
    <scope>NUCLEOTIDE SEQUENCE [LARGE SCALE GENOMIC DNA]</scope>
    <source>
        <strain>TCF52B</strain>
    </source>
</reference>
<protein>
    <recommendedName>
        <fullName evidence="1">Fluoride-specific ion channel FluC</fullName>
    </recommendedName>
</protein>
<comment type="function">
    <text evidence="1">Fluoride-specific ion channel. Important for reducing fluoride concentration in the cell, thus reducing its toxicity.</text>
</comment>
<comment type="catalytic activity">
    <reaction evidence="1">
        <text>fluoride(in) = fluoride(out)</text>
        <dbReference type="Rhea" id="RHEA:76159"/>
        <dbReference type="ChEBI" id="CHEBI:17051"/>
    </reaction>
    <physiologicalReaction direction="left-to-right" evidence="1">
        <dbReference type="Rhea" id="RHEA:76160"/>
    </physiologicalReaction>
</comment>
<comment type="activity regulation">
    <text evidence="1">Na(+) is not transported, but it plays an essential structural role and its presence is essential for fluoride channel function.</text>
</comment>
<comment type="subcellular location">
    <subcellularLocation>
        <location evidence="1">Cell inner membrane</location>
        <topology evidence="1">Multi-pass membrane protein</topology>
    </subcellularLocation>
</comment>
<comment type="similarity">
    <text evidence="1">Belongs to the fluoride channel Fluc/FEX (TC 1.A.43) family.</text>
</comment>
<name>FLUC_THEAB</name>
<gene>
    <name evidence="1" type="primary">fluC</name>
    <name evidence="1" type="synonym">crcB</name>
    <name type="ordered locus">THA_413</name>
</gene>
<feature type="chain" id="PRO_1000125162" description="Fluoride-specific ion channel FluC">
    <location>
        <begin position="1"/>
        <end position="125"/>
    </location>
</feature>
<feature type="transmembrane region" description="Helical" evidence="1">
    <location>
        <begin position="36"/>
        <end position="56"/>
    </location>
</feature>
<feature type="transmembrane region" description="Helical" evidence="1">
    <location>
        <begin position="65"/>
        <end position="85"/>
    </location>
</feature>
<feature type="transmembrane region" description="Helical" evidence="1">
    <location>
        <begin position="99"/>
        <end position="119"/>
    </location>
</feature>
<feature type="binding site" evidence="1">
    <location>
        <position position="75"/>
    </location>
    <ligand>
        <name>Na(+)</name>
        <dbReference type="ChEBI" id="CHEBI:29101"/>
        <note>structural</note>
    </ligand>
</feature>
<feature type="binding site" evidence="1">
    <location>
        <position position="78"/>
    </location>
    <ligand>
        <name>Na(+)</name>
        <dbReference type="ChEBI" id="CHEBI:29101"/>
        <note>structural</note>
    </ligand>
</feature>
<keyword id="KW-0997">Cell inner membrane</keyword>
<keyword id="KW-1003">Cell membrane</keyword>
<keyword id="KW-0407">Ion channel</keyword>
<keyword id="KW-0406">Ion transport</keyword>
<keyword id="KW-0472">Membrane</keyword>
<keyword id="KW-0479">Metal-binding</keyword>
<keyword id="KW-1185">Reference proteome</keyword>
<keyword id="KW-0915">Sodium</keyword>
<keyword id="KW-0812">Transmembrane</keyword>
<keyword id="KW-1133">Transmembrane helix</keyword>
<keyword id="KW-0813">Transport</keyword>
<accession>B7IFP2</accession>
<sequence length="125" mass="13882">MKSLYVAFGGALGAVSRYVISKFINSSFSFSFVPWGTIFVNVVGSFLLSFLMFLSISKTDISQSFILFFGTGFLGAFTTFSTFAYEFLSIFLTQPLRAIIYFIANIFLGFFAAILGMFLGRGRIL</sequence>
<proteinExistence type="inferred from homology"/>
<organism>
    <name type="scientific">Thermosipho africanus (strain TCF52B)</name>
    <dbReference type="NCBI Taxonomy" id="484019"/>
    <lineage>
        <taxon>Bacteria</taxon>
        <taxon>Thermotogati</taxon>
        <taxon>Thermotogota</taxon>
        <taxon>Thermotogae</taxon>
        <taxon>Thermotogales</taxon>
        <taxon>Fervidobacteriaceae</taxon>
        <taxon>Thermosipho</taxon>
    </lineage>
</organism>
<dbReference type="EMBL" id="CP001185">
    <property type="protein sequence ID" value="ACJ74906.1"/>
    <property type="molecule type" value="Genomic_DNA"/>
</dbReference>
<dbReference type="RefSeq" id="WP_004104149.1">
    <property type="nucleotide sequence ID" value="NC_011653.1"/>
</dbReference>
<dbReference type="SMR" id="B7IFP2"/>
<dbReference type="STRING" id="484019.THA_413"/>
<dbReference type="KEGG" id="taf:THA_413"/>
<dbReference type="eggNOG" id="COG0239">
    <property type="taxonomic scope" value="Bacteria"/>
</dbReference>
<dbReference type="HOGENOM" id="CLU_114342_2_3_0"/>
<dbReference type="OrthoDB" id="9815830at2"/>
<dbReference type="Proteomes" id="UP000002453">
    <property type="component" value="Chromosome"/>
</dbReference>
<dbReference type="GO" id="GO:0005886">
    <property type="term" value="C:plasma membrane"/>
    <property type="evidence" value="ECO:0007669"/>
    <property type="project" value="UniProtKB-SubCell"/>
</dbReference>
<dbReference type="GO" id="GO:0062054">
    <property type="term" value="F:fluoride channel activity"/>
    <property type="evidence" value="ECO:0007669"/>
    <property type="project" value="UniProtKB-UniRule"/>
</dbReference>
<dbReference type="GO" id="GO:0046872">
    <property type="term" value="F:metal ion binding"/>
    <property type="evidence" value="ECO:0007669"/>
    <property type="project" value="UniProtKB-KW"/>
</dbReference>
<dbReference type="GO" id="GO:0140114">
    <property type="term" value="P:cellular detoxification of fluoride"/>
    <property type="evidence" value="ECO:0007669"/>
    <property type="project" value="UniProtKB-UniRule"/>
</dbReference>
<dbReference type="HAMAP" id="MF_00454">
    <property type="entry name" value="FluC"/>
    <property type="match status" value="1"/>
</dbReference>
<dbReference type="InterPro" id="IPR003691">
    <property type="entry name" value="FluC"/>
</dbReference>
<dbReference type="NCBIfam" id="TIGR00494">
    <property type="entry name" value="crcB"/>
    <property type="match status" value="1"/>
</dbReference>
<dbReference type="PANTHER" id="PTHR28259">
    <property type="entry name" value="FLUORIDE EXPORT PROTEIN 1-RELATED"/>
    <property type="match status" value="1"/>
</dbReference>
<dbReference type="PANTHER" id="PTHR28259:SF18">
    <property type="entry name" value="FLUORIDE-SPECIFIC ION CHANNEL FLUC"/>
    <property type="match status" value="1"/>
</dbReference>
<dbReference type="Pfam" id="PF02537">
    <property type="entry name" value="CRCB"/>
    <property type="match status" value="1"/>
</dbReference>
<evidence type="ECO:0000255" key="1">
    <source>
        <dbReference type="HAMAP-Rule" id="MF_00454"/>
    </source>
</evidence>